<comment type="similarity">
    <text evidence="2">Belongs to the chlamydial CPn_0065/CT_288/TC_0561 family.</text>
</comment>
<evidence type="ECO:0000256" key="1">
    <source>
        <dbReference type="SAM" id="MobiDB-lite"/>
    </source>
</evidence>
<evidence type="ECO:0000305" key="2"/>
<gene>
    <name type="ordered locus">TC_0561</name>
</gene>
<sequence length="558" mass="62515">MVYFKAGQPEHTPRTFPLQINRSFSDKHPKVAKALRITAIVLVSLSLIALVGCIAALSGGAVIPLAAIGGIAAVTGLLSSAIAIYSAKKALAHKKQKQLADSLPLDTGTEHVQYLTTNNFRGNNWDTLEKLVQQFSQLDLTVHPSEKELLKEVFGTEYKSINQTIESISNRFAKIRSLLYQREQLYKGEERYNRYLNTPLLRKNRILTQITSNMIRLLPRSGGVFSIKANTLSRTSHTLYTILKVSLSLGVIAAVASLVIFLPPSLPIIAALGLASLSLGIAAFLMARGIRYLLERSSINRKQLAEDIQKTIGPDVLNSMAYYQHQLLSHLHETLLDEAITTKWNQPIFLEHADLELKIGDLTKQYDILNSAFEQALRNDELLRAQLEKRAYRFGSSITDNDTDNDSGATESQQTDSENDGFQEILNKGIEAAKQRREKANQSGSNKEDMFSIWKPSKHLALEDLWRASEACTEEQLSILVDNCMSYKTLECQAALQKVRLQLQTAQRSLAALENRAENAYYESNLSMMDLARANQETYRLLNILSELQQLAQYVLDR</sequence>
<protein>
    <recommendedName>
        <fullName>Uncharacterized protein TC_0561</fullName>
    </recommendedName>
</protein>
<reference key="1">
    <citation type="journal article" date="2000" name="Nucleic Acids Res.">
        <title>Genome sequences of Chlamydia trachomatis MoPn and Chlamydia pneumoniae AR39.</title>
        <authorList>
            <person name="Read T.D."/>
            <person name="Brunham R.C."/>
            <person name="Shen C."/>
            <person name="Gill S.R."/>
            <person name="Heidelberg J.F."/>
            <person name="White O."/>
            <person name="Hickey E.K."/>
            <person name="Peterson J.D."/>
            <person name="Utterback T.R."/>
            <person name="Berry K.J."/>
            <person name="Bass S."/>
            <person name="Linher K.D."/>
            <person name="Weidman J.F."/>
            <person name="Khouri H.M."/>
            <person name="Craven B."/>
            <person name="Bowman C."/>
            <person name="Dodson R.J."/>
            <person name="Gwinn M.L."/>
            <person name="Nelson W.C."/>
            <person name="DeBoy R.T."/>
            <person name="Kolonay J.F."/>
            <person name="McClarty G."/>
            <person name="Salzberg S.L."/>
            <person name="Eisen J.A."/>
            <person name="Fraser C.M."/>
        </authorList>
    </citation>
    <scope>NUCLEOTIDE SEQUENCE [LARGE SCALE GENOMIC DNA]</scope>
    <source>
        <strain>MoPn / Nigg</strain>
    </source>
</reference>
<dbReference type="EMBL" id="AE002160">
    <property type="protein sequence ID" value="AAF39400.1"/>
    <property type="molecule type" value="Genomic_DNA"/>
</dbReference>
<dbReference type="PIR" id="D81689">
    <property type="entry name" value="D81689"/>
</dbReference>
<dbReference type="RefSeq" id="WP_010230837.1">
    <property type="nucleotide sequence ID" value="NZ_CP063055.1"/>
</dbReference>
<dbReference type="SMR" id="Q9PKA6"/>
<dbReference type="GeneID" id="1245920"/>
<dbReference type="KEGG" id="cmu:TC_0561"/>
<dbReference type="HOGENOM" id="CLU_482906_0_0_0"/>
<dbReference type="OrthoDB" id="19205at2"/>
<dbReference type="Proteomes" id="UP000000800">
    <property type="component" value="Chromosome"/>
</dbReference>
<organism>
    <name type="scientific">Chlamydia muridarum (strain MoPn / Nigg)</name>
    <dbReference type="NCBI Taxonomy" id="243161"/>
    <lineage>
        <taxon>Bacteria</taxon>
        <taxon>Pseudomonadati</taxon>
        <taxon>Chlamydiota</taxon>
        <taxon>Chlamydiia</taxon>
        <taxon>Chlamydiales</taxon>
        <taxon>Chlamydiaceae</taxon>
        <taxon>Chlamydia/Chlamydophila group</taxon>
        <taxon>Chlamydia</taxon>
    </lineage>
</organism>
<proteinExistence type="inferred from homology"/>
<accession>Q9PKA6</accession>
<name>Y561_CHLMU</name>
<feature type="chain" id="PRO_0000218351" description="Uncharacterized protein TC_0561">
    <location>
        <begin position="1"/>
        <end position="558"/>
    </location>
</feature>
<feature type="region of interest" description="Disordered" evidence="1">
    <location>
        <begin position="396"/>
        <end position="420"/>
    </location>
</feature>
<feature type="compositionally biased region" description="Polar residues" evidence="1">
    <location>
        <begin position="407"/>
        <end position="416"/>
    </location>
</feature>